<protein>
    <recommendedName>
        <fullName evidence="1">Protease HtpX</fullName>
        <ecNumber evidence="1">3.4.24.-</ecNumber>
    </recommendedName>
    <alternativeName>
        <fullName evidence="1">Heat shock protein HtpX</fullName>
    </alternativeName>
</protein>
<proteinExistence type="inferred from homology"/>
<comment type="cofactor">
    <cofactor evidence="1">
        <name>Zn(2+)</name>
        <dbReference type="ChEBI" id="CHEBI:29105"/>
    </cofactor>
    <text evidence="1">Binds 1 zinc ion per subunit.</text>
</comment>
<comment type="subcellular location">
    <subcellularLocation>
        <location evidence="1">Cell inner membrane</location>
        <topology evidence="1">Multi-pass membrane protein</topology>
    </subcellularLocation>
</comment>
<comment type="similarity">
    <text evidence="1">Belongs to the peptidase M48B family.</text>
</comment>
<sequence length="300" mass="32775">MMRILLFLATNLAVVLVASITLRLLGVEPYLNANGLNMNSLLIFCFVIGMAGSLVSLFISKWMAKMSTKAKVIEQPGNATERWLLDTVGELARDAGIKMPEVAIFPAQQSNAFATGWNKNDALVAVSAGLLERMRPEEIRAVLAHEIGHVANGDMVTLALIQGVLNTFVMFFARIVAQLVDSFLRRDDEGGGLGFFGYMAVVIVAEIVFGLVASMVVAWFSRFREYRADAAGAKLAGSGAMINALARLKAETQMPDQMPDTLTAFAITTGQTRKLMERLFASHPPLDDRIRALKESAYRE</sequence>
<dbReference type="EC" id="3.4.24.-" evidence="1"/>
<dbReference type="EMBL" id="CP000285">
    <property type="protein sequence ID" value="ABE58702.1"/>
    <property type="molecule type" value="Genomic_DNA"/>
</dbReference>
<dbReference type="RefSeq" id="WP_011506648.1">
    <property type="nucleotide sequence ID" value="NC_007963.1"/>
</dbReference>
<dbReference type="SMR" id="Q1QXV6"/>
<dbReference type="STRING" id="290398.Csal_1347"/>
<dbReference type="MEROPS" id="M48.002"/>
<dbReference type="GeneID" id="95334085"/>
<dbReference type="KEGG" id="csa:Csal_1347"/>
<dbReference type="eggNOG" id="COG0501">
    <property type="taxonomic scope" value="Bacteria"/>
</dbReference>
<dbReference type="HOGENOM" id="CLU_042266_1_0_6"/>
<dbReference type="OrthoDB" id="15218at2"/>
<dbReference type="Proteomes" id="UP000000239">
    <property type="component" value="Chromosome"/>
</dbReference>
<dbReference type="GO" id="GO:0005886">
    <property type="term" value="C:plasma membrane"/>
    <property type="evidence" value="ECO:0007669"/>
    <property type="project" value="UniProtKB-SubCell"/>
</dbReference>
<dbReference type="GO" id="GO:0004222">
    <property type="term" value="F:metalloendopeptidase activity"/>
    <property type="evidence" value="ECO:0007669"/>
    <property type="project" value="UniProtKB-UniRule"/>
</dbReference>
<dbReference type="GO" id="GO:0008270">
    <property type="term" value="F:zinc ion binding"/>
    <property type="evidence" value="ECO:0007669"/>
    <property type="project" value="UniProtKB-UniRule"/>
</dbReference>
<dbReference type="GO" id="GO:0006508">
    <property type="term" value="P:proteolysis"/>
    <property type="evidence" value="ECO:0007669"/>
    <property type="project" value="UniProtKB-KW"/>
</dbReference>
<dbReference type="CDD" id="cd07335">
    <property type="entry name" value="M48B_HtpX_like"/>
    <property type="match status" value="1"/>
</dbReference>
<dbReference type="Gene3D" id="3.30.2010.10">
    <property type="entry name" value="Metalloproteases ('zincins'), catalytic domain"/>
    <property type="match status" value="1"/>
</dbReference>
<dbReference type="HAMAP" id="MF_00188">
    <property type="entry name" value="Pept_M48_protease_HtpX"/>
    <property type="match status" value="1"/>
</dbReference>
<dbReference type="InterPro" id="IPR050083">
    <property type="entry name" value="HtpX_protease"/>
</dbReference>
<dbReference type="InterPro" id="IPR022919">
    <property type="entry name" value="Pept_M48_protease_HtpX"/>
</dbReference>
<dbReference type="InterPro" id="IPR001915">
    <property type="entry name" value="Peptidase_M48"/>
</dbReference>
<dbReference type="NCBIfam" id="NF003965">
    <property type="entry name" value="PRK05457.1"/>
    <property type="match status" value="1"/>
</dbReference>
<dbReference type="PANTHER" id="PTHR43221">
    <property type="entry name" value="PROTEASE HTPX"/>
    <property type="match status" value="1"/>
</dbReference>
<dbReference type="PANTHER" id="PTHR43221:SF1">
    <property type="entry name" value="PROTEASE HTPX"/>
    <property type="match status" value="1"/>
</dbReference>
<dbReference type="Pfam" id="PF01435">
    <property type="entry name" value="Peptidase_M48"/>
    <property type="match status" value="1"/>
</dbReference>
<reference key="1">
    <citation type="journal article" date="2011" name="Stand. Genomic Sci.">
        <title>Complete genome sequence of the halophilic and highly halotolerant Chromohalobacter salexigens type strain (1H11(T)).</title>
        <authorList>
            <person name="Copeland A."/>
            <person name="O'Connor K."/>
            <person name="Lucas S."/>
            <person name="Lapidus A."/>
            <person name="Berry K.W."/>
            <person name="Detter J.C."/>
            <person name="Del Rio T.G."/>
            <person name="Hammon N."/>
            <person name="Dalin E."/>
            <person name="Tice H."/>
            <person name="Pitluck S."/>
            <person name="Bruce D."/>
            <person name="Goodwin L."/>
            <person name="Han C."/>
            <person name="Tapia R."/>
            <person name="Saunders E."/>
            <person name="Schmutz J."/>
            <person name="Brettin T."/>
            <person name="Larimer F."/>
            <person name="Land M."/>
            <person name="Hauser L."/>
            <person name="Vargas C."/>
            <person name="Nieto J.J."/>
            <person name="Kyrpides N.C."/>
            <person name="Ivanova N."/>
            <person name="Goker M."/>
            <person name="Klenk H.P."/>
            <person name="Csonka L.N."/>
            <person name="Woyke T."/>
        </authorList>
    </citation>
    <scope>NUCLEOTIDE SEQUENCE [LARGE SCALE GENOMIC DNA]</scope>
    <source>
        <strain>ATCC BAA-138 / DSM 3043 / CIP 106854 / NCIMB 13768 / 1H11</strain>
    </source>
</reference>
<organism>
    <name type="scientific">Chromohalobacter salexigens (strain ATCC BAA-138 / DSM 3043 / CIP 106854 / NCIMB 13768 / 1H11)</name>
    <dbReference type="NCBI Taxonomy" id="290398"/>
    <lineage>
        <taxon>Bacteria</taxon>
        <taxon>Pseudomonadati</taxon>
        <taxon>Pseudomonadota</taxon>
        <taxon>Gammaproteobacteria</taxon>
        <taxon>Oceanospirillales</taxon>
        <taxon>Halomonadaceae</taxon>
        <taxon>Chromohalobacter</taxon>
    </lineage>
</organism>
<evidence type="ECO:0000255" key="1">
    <source>
        <dbReference type="HAMAP-Rule" id="MF_00188"/>
    </source>
</evidence>
<feature type="chain" id="PRO_1000020859" description="Protease HtpX">
    <location>
        <begin position="1"/>
        <end position="300"/>
    </location>
</feature>
<feature type="transmembrane region" description="Helical" evidence="1">
    <location>
        <begin position="4"/>
        <end position="24"/>
    </location>
</feature>
<feature type="transmembrane region" description="Helical" evidence="1">
    <location>
        <begin position="40"/>
        <end position="60"/>
    </location>
</feature>
<feature type="transmembrane region" description="Helical" evidence="1">
    <location>
        <begin position="153"/>
        <end position="173"/>
    </location>
</feature>
<feature type="transmembrane region" description="Helical" evidence="1">
    <location>
        <begin position="193"/>
        <end position="213"/>
    </location>
</feature>
<feature type="active site" evidence="1">
    <location>
        <position position="146"/>
    </location>
</feature>
<feature type="binding site" evidence="1">
    <location>
        <position position="145"/>
    </location>
    <ligand>
        <name>Zn(2+)</name>
        <dbReference type="ChEBI" id="CHEBI:29105"/>
        <note>catalytic</note>
    </ligand>
</feature>
<feature type="binding site" evidence="1">
    <location>
        <position position="149"/>
    </location>
    <ligand>
        <name>Zn(2+)</name>
        <dbReference type="ChEBI" id="CHEBI:29105"/>
        <note>catalytic</note>
    </ligand>
</feature>
<feature type="binding site" evidence="1">
    <location>
        <position position="225"/>
    </location>
    <ligand>
        <name>Zn(2+)</name>
        <dbReference type="ChEBI" id="CHEBI:29105"/>
        <note>catalytic</note>
    </ligand>
</feature>
<gene>
    <name evidence="1" type="primary">htpX</name>
    <name type="ordered locus">Csal_1347</name>
</gene>
<name>HTPX_CHRSD</name>
<accession>Q1QXV6</accession>
<keyword id="KW-0997">Cell inner membrane</keyword>
<keyword id="KW-1003">Cell membrane</keyword>
<keyword id="KW-0378">Hydrolase</keyword>
<keyword id="KW-0472">Membrane</keyword>
<keyword id="KW-0479">Metal-binding</keyword>
<keyword id="KW-0482">Metalloprotease</keyword>
<keyword id="KW-0645">Protease</keyword>
<keyword id="KW-1185">Reference proteome</keyword>
<keyword id="KW-0812">Transmembrane</keyword>
<keyword id="KW-1133">Transmembrane helix</keyword>
<keyword id="KW-0862">Zinc</keyword>